<feature type="chain" id="PRO_0000399700" description="Altered inheritance of mitochondria protein 32">
    <location>
        <begin position="1"/>
        <end position="311"/>
    </location>
</feature>
<name>AIM32_SACK1</name>
<sequence length="311" mass="35781">MLRTTVRTLRQRAFFHRSFVHVNLPELHSAIQDAQTTCYCQSINARLPSTTDPLDPQIKLPHRTPNYNKHVLLVSPGDKLAQPWKIAWNHNLDTNLNRPYNAIGKLRSYLRNSPGILINAVHLQNEFVPRPKEGDKWLFFFVIPDMKLYKIRETDLEEFASFLDEGVVQAPRLSFQDYLIGKAKVPQETQQVHHKNLTKFQGDIFLRDWSLVCGHYKRDAKCGEMGPDIIAAFQDEKLLTDNNLGLISHVGGHVFAGNVIFYKLFKAENALNKLDSLWFGKVYPHNLKLLCENLENGKIIDEMYRGGISMN</sequence>
<dbReference type="EMBL" id="AY740030">
    <property type="protein sequence ID" value="AAU43751.1"/>
    <property type="molecule type" value="Genomic_DNA"/>
</dbReference>
<dbReference type="EMBL" id="AACI03000741">
    <property type="protein sequence ID" value="EJT43531.1"/>
    <property type="molecule type" value="Genomic_DNA"/>
</dbReference>
<dbReference type="SMR" id="Q5XQP3"/>
<dbReference type="STRING" id="226230.Q5XQP3"/>
<dbReference type="HOGENOM" id="CLU_044499_1_0_1"/>
<dbReference type="OrthoDB" id="10253744at2759"/>
<dbReference type="Proteomes" id="UP000002753">
    <property type="component" value="Unassembled WGS sequence"/>
</dbReference>
<dbReference type="CDD" id="cd03062">
    <property type="entry name" value="TRX_Fd_Sucrase"/>
    <property type="match status" value="1"/>
</dbReference>
<dbReference type="InterPro" id="IPR009737">
    <property type="entry name" value="Aim32/Apd1-like"/>
</dbReference>
<dbReference type="InterPro" id="IPR036249">
    <property type="entry name" value="Thioredoxin-like_sf"/>
</dbReference>
<dbReference type="PANTHER" id="PTHR31902">
    <property type="entry name" value="ACTIN PATCHES DISTAL PROTEIN 1"/>
    <property type="match status" value="1"/>
</dbReference>
<dbReference type="PANTHER" id="PTHR31902:SF7">
    <property type="entry name" value="ALTERED INHERITANCE OF MITOCHONDRIA PROTEIN 32"/>
    <property type="match status" value="1"/>
</dbReference>
<dbReference type="Pfam" id="PF06999">
    <property type="entry name" value="Suc_Fer-like"/>
    <property type="match status" value="1"/>
</dbReference>
<dbReference type="SUPFAM" id="SSF52833">
    <property type="entry name" value="Thioredoxin-like"/>
    <property type="match status" value="1"/>
</dbReference>
<accession>Q5XQP3</accession>
<accession>J5S249</accession>
<evidence type="ECO:0000305" key="1"/>
<keyword id="KW-1185">Reference proteome</keyword>
<organism>
    <name type="scientific">Saccharomyces kudriavzevii (strain ATCC MYA-4449 / AS 2.2408 / CBS 8840 / NBRC 1802 / NCYC 2889)</name>
    <name type="common">Yeast</name>
    <dbReference type="NCBI Taxonomy" id="226230"/>
    <lineage>
        <taxon>Eukaryota</taxon>
        <taxon>Fungi</taxon>
        <taxon>Dikarya</taxon>
        <taxon>Ascomycota</taxon>
        <taxon>Saccharomycotina</taxon>
        <taxon>Saccharomycetes</taxon>
        <taxon>Saccharomycetales</taxon>
        <taxon>Saccharomycetaceae</taxon>
        <taxon>Saccharomyces</taxon>
    </lineage>
</organism>
<proteinExistence type="inferred from homology"/>
<gene>
    <name type="primary">AIM32</name>
</gene>
<reference key="1">
    <citation type="journal article" date="2004" name="Proc. Natl. Acad. Sci. U.S.A.">
        <title>Parallel inactivation of multiple GAL pathway genes and ecological diversification in yeasts.</title>
        <authorList>
            <person name="Hittinger C.T."/>
            <person name="Rokas A."/>
            <person name="Carroll S.B."/>
        </authorList>
    </citation>
    <scope>NUCLEOTIDE SEQUENCE [GENOMIC DNA]</scope>
    <source>
        <strain>ATCC MYA-4449 / AS 2.2408 / CBS 8840 / NBRC 1802 / NCYC 2889</strain>
    </source>
</reference>
<reference key="2">
    <citation type="journal article" date="2003" name="Science">
        <title>Finding functional features in Saccharomyces genomes by phylogenetic footprinting.</title>
        <authorList>
            <person name="Cliften P.F."/>
            <person name="Sudarsanam P."/>
            <person name="Desikan A."/>
            <person name="Fulton L."/>
            <person name="Fulton B."/>
            <person name="Majors J."/>
            <person name="Waterston R."/>
            <person name="Cohen B.A."/>
            <person name="Johnston M."/>
        </authorList>
    </citation>
    <scope>NUCLEOTIDE SEQUENCE [LARGE SCALE GENOMIC DNA]</scope>
    <source>
        <strain>ATCC MYA-4449 / AS 2.2408 / CBS 8840 / NBRC 1802 / NCYC 2889</strain>
    </source>
</reference>
<reference key="3">
    <citation type="journal article" date="2011" name="G3 (Bethesda)">
        <title>The awesome power of yeast evolutionary genetics: New genome sequences and strain resources for the Saccharomyces sensu stricto genus.</title>
        <authorList>
            <person name="Scannell D.R."/>
            <person name="Zill O.A."/>
            <person name="Rokas A."/>
            <person name="Payen C."/>
            <person name="Dunham M.J."/>
            <person name="Eisen M.B."/>
            <person name="Rine J."/>
            <person name="Johnston M."/>
            <person name="Hittinger C.T."/>
        </authorList>
    </citation>
    <scope>GENOME REANNOTATION</scope>
    <source>
        <strain>ATCC MYA-4449 / AS 2.2408 / CBS 8840 / NBRC 1802 / NCYC 2889</strain>
    </source>
</reference>
<comment type="similarity">
    <text evidence="1">Belongs to the AIM32 family.</text>
</comment>
<protein>
    <recommendedName>
        <fullName>Altered inheritance of mitochondria protein 32</fullName>
    </recommendedName>
</protein>